<name>URE1_STAAR</name>
<keyword id="KW-0963">Cytoplasm</keyword>
<keyword id="KW-0378">Hydrolase</keyword>
<keyword id="KW-0479">Metal-binding</keyword>
<keyword id="KW-0533">Nickel</keyword>
<comment type="catalytic activity">
    <reaction evidence="1">
        <text>urea + 2 H2O + H(+) = hydrogencarbonate + 2 NH4(+)</text>
        <dbReference type="Rhea" id="RHEA:20557"/>
        <dbReference type="ChEBI" id="CHEBI:15377"/>
        <dbReference type="ChEBI" id="CHEBI:15378"/>
        <dbReference type="ChEBI" id="CHEBI:16199"/>
        <dbReference type="ChEBI" id="CHEBI:17544"/>
        <dbReference type="ChEBI" id="CHEBI:28938"/>
        <dbReference type="EC" id="3.5.1.5"/>
    </reaction>
</comment>
<comment type="cofactor">
    <cofactor evidence="1">
        <name>Ni cation</name>
        <dbReference type="ChEBI" id="CHEBI:25516"/>
    </cofactor>
    <text evidence="1">Binds 2 nickel ions per subunit.</text>
</comment>
<comment type="pathway">
    <text evidence="1">Nitrogen metabolism; urea degradation; CO(2) and NH(3) from urea (urease route): step 1/1.</text>
</comment>
<comment type="subunit">
    <text evidence="1">Heterotrimer of UreA (gamma), UreB (beta) and UreC (alpha) subunits. Three heterotrimers associate to form the active enzyme.</text>
</comment>
<comment type="subcellular location">
    <subcellularLocation>
        <location evidence="1">Cytoplasm</location>
    </subcellularLocation>
</comment>
<comment type="PTM">
    <text evidence="1">Carboxylation allows a single lysine to coordinate two nickel ions.</text>
</comment>
<comment type="similarity">
    <text evidence="1">Belongs to the metallo-dependent hydrolases superfamily. Urease alpha subunit family.</text>
</comment>
<organism>
    <name type="scientific">Staphylococcus aureus (strain MRSA252)</name>
    <dbReference type="NCBI Taxonomy" id="282458"/>
    <lineage>
        <taxon>Bacteria</taxon>
        <taxon>Bacillati</taxon>
        <taxon>Bacillota</taxon>
        <taxon>Bacilli</taxon>
        <taxon>Bacillales</taxon>
        <taxon>Staphylococcaceae</taxon>
        <taxon>Staphylococcus</taxon>
    </lineage>
</organism>
<proteinExistence type="inferred from homology"/>
<gene>
    <name evidence="1" type="primary">ureC</name>
    <name type="ordered locus">SAR2374</name>
</gene>
<evidence type="ECO:0000255" key="1">
    <source>
        <dbReference type="HAMAP-Rule" id="MF_01953"/>
    </source>
</evidence>
<feature type="chain" id="PRO_0000067555" description="Urease subunit alpha">
    <location>
        <begin position="1"/>
        <end position="571"/>
    </location>
</feature>
<feature type="domain" description="Urease" evidence="1">
    <location>
        <begin position="133"/>
        <end position="571"/>
    </location>
</feature>
<feature type="active site" description="Proton donor" evidence="1">
    <location>
        <position position="324"/>
    </location>
</feature>
<feature type="binding site" evidence="1">
    <location>
        <position position="138"/>
    </location>
    <ligand>
        <name>Ni(2+)</name>
        <dbReference type="ChEBI" id="CHEBI:49786"/>
        <label>1</label>
    </ligand>
</feature>
<feature type="binding site" evidence="1">
    <location>
        <position position="140"/>
    </location>
    <ligand>
        <name>Ni(2+)</name>
        <dbReference type="ChEBI" id="CHEBI:49786"/>
        <label>1</label>
    </ligand>
</feature>
<feature type="binding site" description="via carbamate group" evidence="1">
    <location>
        <position position="221"/>
    </location>
    <ligand>
        <name>Ni(2+)</name>
        <dbReference type="ChEBI" id="CHEBI:49786"/>
        <label>1</label>
    </ligand>
</feature>
<feature type="binding site" description="via carbamate group" evidence="1">
    <location>
        <position position="221"/>
    </location>
    <ligand>
        <name>Ni(2+)</name>
        <dbReference type="ChEBI" id="CHEBI:49786"/>
        <label>2</label>
    </ligand>
</feature>
<feature type="binding site" evidence="1">
    <location>
        <position position="223"/>
    </location>
    <ligand>
        <name>substrate</name>
    </ligand>
</feature>
<feature type="binding site" evidence="1">
    <location>
        <position position="250"/>
    </location>
    <ligand>
        <name>Ni(2+)</name>
        <dbReference type="ChEBI" id="CHEBI:49786"/>
        <label>2</label>
    </ligand>
</feature>
<feature type="binding site" evidence="1">
    <location>
        <position position="276"/>
    </location>
    <ligand>
        <name>Ni(2+)</name>
        <dbReference type="ChEBI" id="CHEBI:49786"/>
        <label>2</label>
    </ligand>
</feature>
<feature type="binding site" evidence="1">
    <location>
        <position position="364"/>
    </location>
    <ligand>
        <name>Ni(2+)</name>
        <dbReference type="ChEBI" id="CHEBI:49786"/>
        <label>1</label>
    </ligand>
</feature>
<feature type="modified residue" description="N6-carboxylysine" evidence="1">
    <location>
        <position position="221"/>
    </location>
</feature>
<protein>
    <recommendedName>
        <fullName evidence="1">Urease subunit alpha</fullName>
        <ecNumber evidence="1">3.5.1.5</ecNumber>
    </recommendedName>
    <alternativeName>
        <fullName evidence="1">Urea amidohydrolase subunit alpha</fullName>
    </alternativeName>
</protein>
<accession>Q6GEE4</accession>
<sequence length="571" mass="61776">MSFKMTQNQYTSLYGPTVGDSIRLGDTNLFAQIEKDYAVYGEEATFGGGKSIRDGMAQNPRVTRDDVNVADLVISNAVIIDYDKVVKADIGIKNGYIFAIGNAGNPDIMDNVDIIIGSTTDIIAAEGKIVTAGGIDTHVHFINPEQAEVALESGITTHIGGGTGASEGSKATTVTPGPWHIHRMLEAAEGLPINVGFTGKGQATNPTALIEQINAGAIGLKVHEDWGATPSALSHALDVADEFDVQIALHADTLNEAGFMEDTMAAVKDRVLHMYHTEGAGGGHAPDLIKSAAFPNILPSSTNPTLPYTHNTVDEHLDMVMITHHLNAAIPEDIAFADSRIRKETIAAEDVLQDMGVFSMISSDSQAMGRVGEVITRTWQVAHRMKEQRGPLDGDYVHNDNNRIKRYIAKYTINPAITHGISEYVGSIEPGKLADIVLWDPIFFGVKPELVVKGGLINSAVNGDANGSIPTSEPMKYRKMYGQYGGNLTSTSMTFVSKTAYENGINRALNLKRMVRPVKNIRQLSKADMKNNSATPKLDVDPQTYEVYVDGEKITSNAATELPLTQRYFLF</sequence>
<dbReference type="EC" id="3.5.1.5" evidence="1"/>
<dbReference type="EMBL" id="BX571856">
    <property type="protein sequence ID" value="CAG41355.1"/>
    <property type="molecule type" value="Genomic_DNA"/>
</dbReference>
<dbReference type="RefSeq" id="WP_000008671.1">
    <property type="nucleotide sequence ID" value="NC_002952.2"/>
</dbReference>
<dbReference type="SMR" id="Q6GEE4"/>
<dbReference type="KEGG" id="sar:SAR2374"/>
<dbReference type="HOGENOM" id="CLU_000980_0_0_9"/>
<dbReference type="UniPathway" id="UPA00258">
    <property type="reaction ID" value="UER00370"/>
</dbReference>
<dbReference type="Proteomes" id="UP000000596">
    <property type="component" value="Chromosome"/>
</dbReference>
<dbReference type="GO" id="GO:0005737">
    <property type="term" value="C:cytoplasm"/>
    <property type="evidence" value="ECO:0007669"/>
    <property type="project" value="UniProtKB-SubCell"/>
</dbReference>
<dbReference type="GO" id="GO:0016151">
    <property type="term" value="F:nickel cation binding"/>
    <property type="evidence" value="ECO:0007669"/>
    <property type="project" value="UniProtKB-UniRule"/>
</dbReference>
<dbReference type="GO" id="GO:0009039">
    <property type="term" value="F:urease activity"/>
    <property type="evidence" value="ECO:0007669"/>
    <property type="project" value="UniProtKB-UniRule"/>
</dbReference>
<dbReference type="GO" id="GO:0043419">
    <property type="term" value="P:urea catabolic process"/>
    <property type="evidence" value="ECO:0007669"/>
    <property type="project" value="UniProtKB-UniRule"/>
</dbReference>
<dbReference type="CDD" id="cd00375">
    <property type="entry name" value="Urease_alpha"/>
    <property type="match status" value="1"/>
</dbReference>
<dbReference type="Gene3D" id="3.20.20.140">
    <property type="entry name" value="Metal-dependent hydrolases"/>
    <property type="match status" value="1"/>
</dbReference>
<dbReference type="Gene3D" id="2.30.40.10">
    <property type="entry name" value="Urease, subunit C, domain 1"/>
    <property type="match status" value="1"/>
</dbReference>
<dbReference type="HAMAP" id="MF_01953">
    <property type="entry name" value="Urease_alpha"/>
    <property type="match status" value="1"/>
</dbReference>
<dbReference type="InterPro" id="IPR006680">
    <property type="entry name" value="Amidohydro-rel"/>
</dbReference>
<dbReference type="InterPro" id="IPR011059">
    <property type="entry name" value="Metal-dep_hydrolase_composite"/>
</dbReference>
<dbReference type="InterPro" id="IPR032466">
    <property type="entry name" value="Metal_Hydrolase"/>
</dbReference>
<dbReference type="InterPro" id="IPR011612">
    <property type="entry name" value="Urease_alpha_N_dom"/>
</dbReference>
<dbReference type="InterPro" id="IPR050112">
    <property type="entry name" value="Urease_alpha_subunit"/>
</dbReference>
<dbReference type="InterPro" id="IPR017950">
    <property type="entry name" value="Urease_AS"/>
</dbReference>
<dbReference type="InterPro" id="IPR005848">
    <property type="entry name" value="Urease_asu"/>
</dbReference>
<dbReference type="InterPro" id="IPR017951">
    <property type="entry name" value="Urease_asu_c"/>
</dbReference>
<dbReference type="InterPro" id="IPR029754">
    <property type="entry name" value="Urease_Ni-bd"/>
</dbReference>
<dbReference type="NCBIfam" id="NF009686">
    <property type="entry name" value="PRK13207.1"/>
    <property type="match status" value="1"/>
</dbReference>
<dbReference type="NCBIfam" id="TIGR01792">
    <property type="entry name" value="urease_alph"/>
    <property type="match status" value="1"/>
</dbReference>
<dbReference type="PANTHER" id="PTHR43440">
    <property type="entry name" value="UREASE"/>
    <property type="match status" value="1"/>
</dbReference>
<dbReference type="PANTHER" id="PTHR43440:SF1">
    <property type="entry name" value="UREASE"/>
    <property type="match status" value="1"/>
</dbReference>
<dbReference type="Pfam" id="PF01979">
    <property type="entry name" value="Amidohydro_1"/>
    <property type="match status" value="1"/>
</dbReference>
<dbReference type="Pfam" id="PF00449">
    <property type="entry name" value="Urease_alpha"/>
    <property type="match status" value="1"/>
</dbReference>
<dbReference type="PRINTS" id="PR01752">
    <property type="entry name" value="UREASE"/>
</dbReference>
<dbReference type="SUPFAM" id="SSF51338">
    <property type="entry name" value="Composite domain of metallo-dependent hydrolases"/>
    <property type="match status" value="1"/>
</dbReference>
<dbReference type="SUPFAM" id="SSF51556">
    <property type="entry name" value="Metallo-dependent hydrolases"/>
    <property type="match status" value="1"/>
</dbReference>
<dbReference type="PROSITE" id="PS01120">
    <property type="entry name" value="UREASE_1"/>
    <property type="match status" value="1"/>
</dbReference>
<dbReference type="PROSITE" id="PS00145">
    <property type="entry name" value="UREASE_2"/>
    <property type="match status" value="1"/>
</dbReference>
<dbReference type="PROSITE" id="PS51368">
    <property type="entry name" value="UREASE_3"/>
    <property type="match status" value="1"/>
</dbReference>
<reference key="1">
    <citation type="journal article" date="2004" name="Proc. Natl. Acad. Sci. U.S.A.">
        <title>Complete genomes of two clinical Staphylococcus aureus strains: evidence for the rapid evolution of virulence and drug resistance.</title>
        <authorList>
            <person name="Holden M.T.G."/>
            <person name="Feil E.J."/>
            <person name="Lindsay J.A."/>
            <person name="Peacock S.J."/>
            <person name="Day N.P.J."/>
            <person name="Enright M.C."/>
            <person name="Foster T.J."/>
            <person name="Moore C.E."/>
            <person name="Hurst L."/>
            <person name="Atkin R."/>
            <person name="Barron A."/>
            <person name="Bason N."/>
            <person name="Bentley S.D."/>
            <person name="Chillingworth C."/>
            <person name="Chillingworth T."/>
            <person name="Churcher C."/>
            <person name="Clark L."/>
            <person name="Corton C."/>
            <person name="Cronin A."/>
            <person name="Doggett J."/>
            <person name="Dowd L."/>
            <person name="Feltwell T."/>
            <person name="Hance Z."/>
            <person name="Harris B."/>
            <person name="Hauser H."/>
            <person name="Holroyd S."/>
            <person name="Jagels K."/>
            <person name="James K.D."/>
            <person name="Lennard N."/>
            <person name="Line A."/>
            <person name="Mayes R."/>
            <person name="Moule S."/>
            <person name="Mungall K."/>
            <person name="Ormond D."/>
            <person name="Quail M.A."/>
            <person name="Rabbinowitsch E."/>
            <person name="Rutherford K.M."/>
            <person name="Sanders M."/>
            <person name="Sharp S."/>
            <person name="Simmonds M."/>
            <person name="Stevens K."/>
            <person name="Whitehead S."/>
            <person name="Barrell B.G."/>
            <person name="Spratt B.G."/>
            <person name="Parkhill J."/>
        </authorList>
    </citation>
    <scope>NUCLEOTIDE SEQUENCE [LARGE SCALE GENOMIC DNA]</scope>
    <source>
        <strain>MRSA252</strain>
    </source>
</reference>